<name>RL7_AKKM8</name>
<organism>
    <name type="scientific">Akkermansia muciniphila (strain ATCC BAA-835 / DSM 22959 / JCM 33894 / BCRC 81048 / CCUG 64013 / CIP 107961 / Muc)</name>
    <dbReference type="NCBI Taxonomy" id="349741"/>
    <lineage>
        <taxon>Bacteria</taxon>
        <taxon>Pseudomonadati</taxon>
        <taxon>Verrucomicrobiota</taxon>
        <taxon>Verrucomicrobiia</taxon>
        <taxon>Verrucomicrobiales</taxon>
        <taxon>Akkermansiaceae</taxon>
        <taxon>Akkermansia</taxon>
    </lineage>
</organism>
<reference key="1">
    <citation type="journal article" date="2011" name="PLoS ONE">
        <title>The genome of Akkermansia muciniphila, a dedicated intestinal mucin degrader, and its use in exploring intestinal metagenomes.</title>
        <authorList>
            <person name="van Passel M.W."/>
            <person name="Kant R."/>
            <person name="Zoetendal E.G."/>
            <person name="Plugge C.M."/>
            <person name="Derrien M."/>
            <person name="Malfatti S.A."/>
            <person name="Chain P.S."/>
            <person name="Woyke T."/>
            <person name="Palva A."/>
            <person name="de Vos W.M."/>
            <person name="Smidt H."/>
        </authorList>
    </citation>
    <scope>NUCLEOTIDE SEQUENCE [LARGE SCALE GENOMIC DNA]</scope>
    <source>
        <strain>ATCC BAA-835 / DSM 22959 / JCM 33894 / BCRC 81048 / CCUG 64013 / CIP 107961 / Muc</strain>
    </source>
</reference>
<dbReference type="EMBL" id="CP001071">
    <property type="protein sequence ID" value="ACD04868.1"/>
    <property type="molecule type" value="Genomic_DNA"/>
</dbReference>
<dbReference type="RefSeq" id="WP_012420083.1">
    <property type="nucleotide sequence ID" value="NZ_CP071807.1"/>
</dbReference>
<dbReference type="SMR" id="B2UQY3"/>
<dbReference type="STRING" id="349741.Amuc_1042"/>
<dbReference type="PaxDb" id="349741-Amuc_1042"/>
<dbReference type="KEGG" id="amu:Amuc_1042"/>
<dbReference type="eggNOG" id="COG0222">
    <property type="taxonomic scope" value="Bacteria"/>
</dbReference>
<dbReference type="HOGENOM" id="CLU_086499_3_0_0"/>
<dbReference type="OrthoDB" id="9811748at2"/>
<dbReference type="BioCyc" id="AMUC349741:G1GBX-1113-MONOMER"/>
<dbReference type="Proteomes" id="UP000001031">
    <property type="component" value="Chromosome"/>
</dbReference>
<dbReference type="GO" id="GO:0005737">
    <property type="term" value="C:cytoplasm"/>
    <property type="evidence" value="ECO:0007669"/>
    <property type="project" value="UniProtKB-ARBA"/>
</dbReference>
<dbReference type="GO" id="GO:1990904">
    <property type="term" value="C:ribonucleoprotein complex"/>
    <property type="evidence" value="ECO:0007669"/>
    <property type="project" value="UniProtKB-KW"/>
</dbReference>
<dbReference type="GO" id="GO:0005840">
    <property type="term" value="C:ribosome"/>
    <property type="evidence" value="ECO:0007669"/>
    <property type="project" value="UniProtKB-KW"/>
</dbReference>
<dbReference type="GO" id="GO:0003729">
    <property type="term" value="F:mRNA binding"/>
    <property type="evidence" value="ECO:0007669"/>
    <property type="project" value="TreeGrafter"/>
</dbReference>
<dbReference type="GO" id="GO:0003735">
    <property type="term" value="F:structural constituent of ribosome"/>
    <property type="evidence" value="ECO:0007669"/>
    <property type="project" value="InterPro"/>
</dbReference>
<dbReference type="GO" id="GO:0006412">
    <property type="term" value="P:translation"/>
    <property type="evidence" value="ECO:0007669"/>
    <property type="project" value="UniProtKB-UniRule"/>
</dbReference>
<dbReference type="FunFam" id="3.30.1390.10:FF:000001">
    <property type="entry name" value="50S ribosomal protein L7/L12"/>
    <property type="match status" value="1"/>
</dbReference>
<dbReference type="Gene3D" id="3.30.1390.10">
    <property type="match status" value="1"/>
</dbReference>
<dbReference type="Gene3D" id="1.20.5.710">
    <property type="entry name" value="Single helix bin"/>
    <property type="match status" value="1"/>
</dbReference>
<dbReference type="HAMAP" id="MF_00368">
    <property type="entry name" value="Ribosomal_bL12"/>
    <property type="match status" value="1"/>
</dbReference>
<dbReference type="InterPro" id="IPR000206">
    <property type="entry name" value="Ribosomal_bL12"/>
</dbReference>
<dbReference type="InterPro" id="IPR013823">
    <property type="entry name" value="Ribosomal_bL12_C"/>
</dbReference>
<dbReference type="InterPro" id="IPR014719">
    <property type="entry name" value="Ribosomal_bL12_C/ClpS-like"/>
</dbReference>
<dbReference type="InterPro" id="IPR008932">
    <property type="entry name" value="Ribosomal_bL12_oligo"/>
</dbReference>
<dbReference type="InterPro" id="IPR036235">
    <property type="entry name" value="Ribosomal_bL12_oligo_N_sf"/>
</dbReference>
<dbReference type="NCBIfam" id="TIGR00855">
    <property type="entry name" value="L12"/>
    <property type="match status" value="1"/>
</dbReference>
<dbReference type="PANTHER" id="PTHR45987">
    <property type="entry name" value="39S RIBOSOMAL PROTEIN L12"/>
    <property type="match status" value="1"/>
</dbReference>
<dbReference type="PANTHER" id="PTHR45987:SF4">
    <property type="entry name" value="LARGE RIBOSOMAL SUBUNIT PROTEIN BL12M"/>
    <property type="match status" value="1"/>
</dbReference>
<dbReference type="Pfam" id="PF00542">
    <property type="entry name" value="Ribosomal_L12"/>
    <property type="match status" value="1"/>
</dbReference>
<dbReference type="Pfam" id="PF16320">
    <property type="entry name" value="Ribosomal_L12_N"/>
    <property type="match status" value="1"/>
</dbReference>
<dbReference type="SUPFAM" id="SSF54736">
    <property type="entry name" value="ClpS-like"/>
    <property type="match status" value="1"/>
</dbReference>
<dbReference type="SUPFAM" id="SSF48300">
    <property type="entry name" value="Ribosomal protein L7/12, oligomerisation (N-terminal) domain"/>
    <property type="match status" value="1"/>
</dbReference>
<sequence length="124" mass="12645">MADINKIAEELGTLTILEAADLVKLLEEKWGVSAAAPVAAAGAAAAPAEAEEEKTEFNVVLTEAGANKIAVIKAVREVKAGLGLVDAKKLVEGTPAVILEAVSKDEANAAKAKLEEAGAKVDVK</sequence>
<accession>B2UQY3</accession>
<feature type="chain" id="PRO_1000121383" description="Large ribosomal subunit protein bL12">
    <location>
        <begin position="1"/>
        <end position="124"/>
    </location>
</feature>
<comment type="function">
    <text evidence="1">Forms part of the ribosomal stalk which helps the ribosome interact with GTP-bound translation factors. Is thus essential for accurate translation.</text>
</comment>
<comment type="subunit">
    <text evidence="1">Homodimer. Part of the ribosomal stalk of the 50S ribosomal subunit. Forms a multimeric L10(L12)X complex, where L10 forms an elongated spine to which 2 to 4 L12 dimers bind in a sequential fashion. Binds GTP-bound translation factors.</text>
</comment>
<comment type="similarity">
    <text evidence="1">Belongs to the bacterial ribosomal protein bL12 family.</text>
</comment>
<protein>
    <recommendedName>
        <fullName evidence="1">Large ribosomal subunit protein bL12</fullName>
    </recommendedName>
    <alternativeName>
        <fullName evidence="2">50S ribosomal protein L7/L12</fullName>
    </alternativeName>
</protein>
<evidence type="ECO:0000255" key="1">
    <source>
        <dbReference type="HAMAP-Rule" id="MF_00368"/>
    </source>
</evidence>
<evidence type="ECO:0000305" key="2"/>
<proteinExistence type="inferred from homology"/>
<gene>
    <name evidence="1" type="primary">rplL</name>
    <name type="ordered locus">Amuc_1042</name>
</gene>
<keyword id="KW-1185">Reference proteome</keyword>
<keyword id="KW-0687">Ribonucleoprotein</keyword>
<keyword id="KW-0689">Ribosomal protein</keyword>